<feature type="chain" id="PRO_1000051258" description="Small ribosomal subunit protein uS9">
    <location>
        <begin position="1"/>
        <end position="166"/>
    </location>
</feature>
<feature type="region of interest" description="Disordered" evidence="2">
    <location>
        <begin position="135"/>
        <end position="166"/>
    </location>
</feature>
<feature type="compositionally biased region" description="Basic and acidic residues" evidence="2">
    <location>
        <begin position="142"/>
        <end position="151"/>
    </location>
</feature>
<feature type="compositionally biased region" description="Basic residues" evidence="2">
    <location>
        <begin position="152"/>
        <end position="166"/>
    </location>
</feature>
<gene>
    <name evidence="1" type="primary">rpsI</name>
    <name type="ordered locus">MAP_4246</name>
</gene>
<evidence type="ECO:0000255" key="1">
    <source>
        <dbReference type="HAMAP-Rule" id="MF_00532"/>
    </source>
</evidence>
<evidence type="ECO:0000256" key="2">
    <source>
        <dbReference type="SAM" id="MobiDB-lite"/>
    </source>
</evidence>
<evidence type="ECO:0000305" key="3"/>
<keyword id="KW-1185">Reference proteome</keyword>
<keyword id="KW-0687">Ribonucleoprotein</keyword>
<keyword id="KW-0689">Ribosomal protein</keyword>
<organism>
    <name type="scientific">Mycolicibacterium paratuberculosis (strain ATCC BAA-968 / K-10)</name>
    <name type="common">Mycobacterium paratuberculosis</name>
    <dbReference type="NCBI Taxonomy" id="262316"/>
    <lineage>
        <taxon>Bacteria</taxon>
        <taxon>Bacillati</taxon>
        <taxon>Actinomycetota</taxon>
        <taxon>Actinomycetes</taxon>
        <taxon>Mycobacteriales</taxon>
        <taxon>Mycobacteriaceae</taxon>
        <taxon>Mycobacterium</taxon>
        <taxon>Mycobacterium avium complex (MAC)</taxon>
    </lineage>
</organism>
<sequence>MTETTEALENPDNPEAETAAAEVTEAPVEAVPAESYVFERPIQTVGRRKEAVVRVRLVPGTGKFNLNGRTLEGYFPNKVHQQLVKAPLVTVDRVDGFDIYAHLHGGGPSGQAGALRLGIARALILASPDDRPALKKAGFLTRDPRATERKKYGLKKARKAPQYSKR</sequence>
<name>RS9_MYCPA</name>
<comment type="similarity">
    <text evidence="1">Belongs to the universal ribosomal protein uS9 family.</text>
</comment>
<dbReference type="EMBL" id="AE016958">
    <property type="protein sequence ID" value="AAS06796.1"/>
    <property type="molecule type" value="Genomic_DNA"/>
</dbReference>
<dbReference type="RefSeq" id="WP_003873430.1">
    <property type="nucleotide sequence ID" value="NZ_CP106873.1"/>
</dbReference>
<dbReference type="SMR" id="Q73S30"/>
<dbReference type="STRING" id="262316.MAP_4246"/>
<dbReference type="KEGG" id="mpa:MAP_4246"/>
<dbReference type="eggNOG" id="COG0103">
    <property type="taxonomic scope" value="Bacteria"/>
</dbReference>
<dbReference type="HOGENOM" id="CLU_046483_2_0_11"/>
<dbReference type="Proteomes" id="UP000000580">
    <property type="component" value="Chromosome"/>
</dbReference>
<dbReference type="GO" id="GO:0005737">
    <property type="term" value="C:cytoplasm"/>
    <property type="evidence" value="ECO:0007669"/>
    <property type="project" value="UniProtKB-ARBA"/>
</dbReference>
<dbReference type="GO" id="GO:0015935">
    <property type="term" value="C:small ribosomal subunit"/>
    <property type="evidence" value="ECO:0007669"/>
    <property type="project" value="TreeGrafter"/>
</dbReference>
<dbReference type="GO" id="GO:0003723">
    <property type="term" value="F:RNA binding"/>
    <property type="evidence" value="ECO:0007669"/>
    <property type="project" value="TreeGrafter"/>
</dbReference>
<dbReference type="GO" id="GO:0003735">
    <property type="term" value="F:structural constituent of ribosome"/>
    <property type="evidence" value="ECO:0007669"/>
    <property type="project" value="InterPro"/>
</dbReference>
<dbReference type="GO" id="GO:0006412">
    <property type="term" value="P:translation"/>
    <property type="evidence" value="ECO:0007669"/>
    <property type="project" value="UniProtKB-UniRule"/>
</dbReference>
<dbReference type="FunFam" id="3.30.230.10:FF:000001">
    <property type="entry name" value="30S ribosomal protein S9"/>
    <property type="match status" value="1"/>
</dbReference>
<dbReference type="Gene3D" id="3.30.230.10">
    <property type="match status" value="1"/>
</dbReference>
<dbReference type="HAMAP" id="MF_00532_B">
    <property type="entry name" value="Ribosomal_uS9_B"/>
    <property type="match status" value="1"/>
</dbReference>
<dbReference type="InterPro" id="IPR020568">
    <property type="entry name" value="Ribosomal_Su5_D2-typ_SF"/>
</dbReference>
<dbReference type="InterPro" id="IPR000754">
    <property type="entry name" value="Ribosomal_uS9"/>
</dbReference>
<dbReference type="InterPro" id="IPR023035">
    <property type="entry name" value="Ribosomal_uS9_bac/plastid"/>
</dbReference>
<dbReference type="InterPro" id="IPR020574">
    <property type="entry name" value="Ribosomal_uS9_CS"/>
</dbReference>
<dbReference type="InterPro" id="IPR014721">
    <property type="entry name" value="Ribsml_uS5_D2-typ_fold_subgr"/>
</dbReference>
<dbReference type="NCBIfam" id="NF001099">
    <property type="entry name" value="PRK00132.1"/>
    <property type="match status" value="1"/>
</dbReference>
<dbReference type="PANTHER" id="PTHR21569">
    <property type="entry name" value="RIBOSOMAL PROTEIN S9"/>
    <property type="match status" value="1"/>
</dbReference>
<dbReference type="PANTHER" id="PTHR21569:SF1">
    <property type="entry name" value="SMALL RIBOSOMAL SUBUNIT PROTEIN US9M"/>
    <property type="match status" value="1"/>
</dbReference>
<dbReference type="Pfam" id="PF00380">
    <property type="entry name" value="Ribosomal_S9"/>
    <property type="match status" value="1"/>
</dbReference>
<dbReference type="SUPFAM" id="SSF54211">
    <property type="entry name" value="Ribosomal protein S5 domain 2-like"/>
    <property type="match status" value="1"/>
</dbReference>
<dbReference type="PROSITE" id="PS00360">
    <property type="entry name" value="RIBOSOMAL_S9"/>
    <property type="match status" value="1"/>
</dbReference>
<reference key="1">
    <citation type="journal article" date="2005" name="Proc. Natl. Acad. Sci. U.S.A.">
        <title>The complete genome sequence of Mycobacterium avium subspecies paratuberculosis.</title>
        <authorList>
            <person name="Li L."/>
            <person name="Bannantine J.P."/>
            <person name="Zhang Q."/>
            <person name="Amonsin A."/>
            <person name="May B.J."/>
            <person name="Alt D."/>
            <person name="Banerji N."/>
            <person name="Kanjilal S."/>
            <person name="Kapur V."/>
        </authorList>
    </citation>
    <scope>NUCLEOTIDE SEQUENCE [LARGE SCALE GENOMIC DNA]</scope>
    <source>
        <strain>ATCC BAA-968 / K-10</strain>
    </source>
</reference>
<protein>
    <recommendedName>
        <fullName evidence="1">Small ribosomal subunit protein uS9</fullName>
    </recommendedName>
    <alternativeName>
        <fullName evidence="3">30S ribosomal protein S9</fullName>
    </alternativeName>
</protein>
<proteinExistence type="inferred from homology"/>
<accession>Q73S30</accession>